<reference key="1">
    <citation type="journal article" date="2000" name="Nature">
        <title>Sequence and analysis of chromosome 3 of the plant Arabidopsis thaliana.</title>
        <authorList>
            <person name="Salanoubat M."/>
            <person name="Lemcke K."/>
            <person name="Rieger M."/>
            <person name="Ansorge W."/>
            <person name="Unseld M."/>
            <person name="Fartmann B."/>
            <person name="Valle G."/>
            <person name="Bloecker H."/>
            <person name="Perez-Alonso M."/>
            <person name="Obermaier B."/>
            <person name="Delseny M."/>
            <person name="Boutry M."/>
            <person name="Grivell L.A."/>
            <person name="Mache R."/>
            <person name="Puigdomenech P."/>
            <person name="De Simone V."/>
            <person name="Choisne N."/>
            <person name="Artiguenave F."/>
            <person name="Robert C."/>
            <person name="Brottier P."/>
            <person name="Wincker P."/>
            <person name="Cattolico L."/>
            <person name="Weissenbach J."/>
            <person name="Saurin W."/>
            <person name="Quetier F."/>
            <person name="Schaefer M."/>
            <person name="Mueller-Auer S."/>
            <person name="Gabel C."/>
            <person name="Fuchs M."/>
            <person name="Benes V."/>
            <person name="Wurmbach E."/>
            <person name="Drzonek H."/>
            <person name="Erfle H."/>
            <person name="Jordan N."/>
            <person name="Bangert S."/>
            <person name="Wiedelmann R."/>
            <person name="Kranz H."/>
            <person name="Voss H."/>
            <person name="Holland R."/>
            <person name="Brandt P."/>
            <person name="Nyakatura G."/>
            <person name="Vezzi A."/>
            <person name="D'Angelo M."/>
            <person name="Pallavicini A."/>
            <person name="Toppo S."/>
            <person name="Simionati B."/>
            <person name="Conrad A."/>
            <person name="Hornischer K."/>
            <person name="Kauer G."/>
            <person name="Loehnert T.-H."/>
            <person name="Nordsiek G."/>
            <person name="Reichelt J."/>
            <person name="Scharfe M."/>
            <person name="Schoen O."/>
            <person name="Bargues M."/>
            <person name="Terol J."/>
            <person name="Climent J."/>
            <person name="Navarro P."/>
            <person name="Collado C."/>
            <person name="Perez-Perez A."/>
            <person name="Ottenwaelder B."/>
            <person name="Duchemin D."/>
            <person name="Cooke R."/>
            <person name="Laudie M."/>
            <person name="Berger-Llauro C."/>
            <person name="Purnelle B."/>
            <person name="Masuy D."/>
            <person name="de Haan M."/>
            <person name="Maarse A.C."/>
            <person name="Alcaraz J.-P."/>
            <person name="Cottet A."/>
            <person name="Casacuberta E."/>
            <person name="Monfort A."/>
            <person name="Argiriou A."/>
            <person name="Flores M."/>
            <person name="Liguori R."/>
            <person name="Vitale D."/>
            <person name="Mannhaupt G."/>
            <person name="Haase D."/>
            <person name="Schoof H."/>
            <person name="Rudd S."/>
            <person name="Zaccaria P."/>
            <person name="Mewes H.-W."/>
            <person name="Mayer K.F.X."/>
            <person name="Kaul S."/>
            <person name="Town C.D."/>
            <person name="Koo H.L."/>
            <person name="Tallon L.J."/>
            <person name="Jenkins J."/>
            <person name="Rooney T."/>
            <person name="Rizzo M."/>
            <person name="Walts A."/>
            <person name="Utterback T."/>
            <person name="Fujii C.Y."/>
            <person name="Shea T.P."/>
            <person name="Creasy T.H."/>
            <person name="Haas B."/>
            <person name="Maiti R."/>
            <person name="Wu D."/>
            <person name="Peterson J."/>
            <person name="Van Aken S."/>
            <person name="Pai G."/>
            <person name="Militscher J."/>
            <person name="Sellers P."/>
            <person name="Gill J.E."/>
            <person name="Feldblyum T.V."/>
            <person name="Preuss D."/>
            <person name="Lin X."/>
            <person name="Nierman W.C."/>
            <person name="Salzberg S.L."/>
            <person name="White O."/>
            <person name="Venter J.C."/>
            <person name="Fraser C.M."/>
            <person name="Kaneko T."/>
            <person name="Nakamura Y."/>
            <person name="Sato S."/>
            <person name="Kato T."/>
            <person name="Asamizu E."/>
            <person name="Sasamoto S."/>
            <person name="Kimura T."/>
            <person name="Idesawa K."/>
            <person name="Kawashima K."/>
            <person name="Kishida Y."/>
            <person name="Kiyokawa C."/>
            <person name="Kohara M."/>
            <person name="Matsumoto M."/>
            <person name="Matsuno A."/>
            <person name="Muraki A."/>
            <person name="Nakayama S."/>
            <person name="Nakazaki N."/>
            <person name="Shinpo S."/>
            <person name="Takeuchi C."/>
            <person name="Wada T."/>
            <person name="Watanabe A."/>
            <person name="Yamada M."/>
            <person name="Yasuda M."/>
            <person name="Tabata S."/>
        </authorList>
    </citation>
    <scope>NUCLEOTIDE SEQUENCE [LARGE SCALE GENOMIC DNA]</scope>
    <source>
        <strain>cv. Columbia</strain>
    </source>
</reference>
<reference key="2">
    <citation type="journal article" date="2017" name="Plant J.">
        <title>Araport11: a complete reannotation of the Arabidopsis thaliana reference genome.</title>
        <authorList>
            <person name="Cheng C.Y."/>
            <person name="Krishnakumar V."/>
            <person name="Chan A.P."/>
            <person name="Thibaud-Nissen F."/>
            <person name="Schobel S."/>
            <person name="Town C.D."/>
        </authorList>
    </citation>
    <scope>GENOME REANNOTATION</scope>
    <source>
        <strain>cv. Columbia</strain>
    </source>
</reference>
<reference key="3">
    <citation type="journal article" date="2003" name="Science">
        <title>Empirical analysis of transcriptional activity in the Arabidopsis genome.</title>
        <authorList>
            <person name="Yamada K."/>
            <person name="Lim J."/>
            <person name="Dale J.M."/>
            <person name="Chen H."/>
            <person name="Shinn P."/>
            <person name="Palm C.J."/>
            <person name="Southwick A.M."/>
            <person name="Wu H.C."/>
            <person name="Kim C.J."/>
            <person name="Nguyen M."/>
            <person name="Pham P.K."/>
            <person name="Cheuk R.F."/>
            <person name="Karlin-Newmann G."/>
            <person name="Liu S.X."/>
            <person name="Lam B."/>
            <person name="Sakano H."/>
            <person name="Wu T."/>
            <person name="Yu G."/>
            <person name="Miranda M."/>
            <person name="Quach H.L."/>
            <person name="Tripp M."/>
            <person name="Chang C.H."/>
            <person name="Lee J.M."/>
            <person name="Toriumi M.J."/>
            <person name="Chan M.M."/>
            <person name="Tang C.C."/>
            <person name="Onodera C.S."/>
            <person name="Deng J.M."/>
            <person name="Akiyama K."/>
            <person name="Ansari Y."/>
            <person name="Arakawa T."/>
            <person name="Banh J."/>
            <person name="Banno F."/>
            <person name="Bowser L."/>
            <person name="Brooks S.Y."/>
            <person name="Carninci P."/>
            <person name="Chao Q."/>
            <person name="Choy N."/>
            <person name="Enju A."/>
            <person name="Goldsmith A.D."/>
            <person name="Gurjal M."/>
            <person name="Hansen N.F."/>
            <person name="Hayashizaki Y."/>
            <person name="Johnson-Hopson C."/>
            <person name="Hsuan V.W."/>
            <person name="Iida K."/>
            <person name="Karnes M."/>
            <person name="Khan S."/>
            <person name="Koesema E."/>
            <person name="Ishida J."/>
            <person name="Jiang P.X."/>
            <person name="Jones T."/>
            <person name="Kawai J."/>
            <person name="Kamiya A."/>
            <person name="Meyers C."/>
            <person name="Nakajima M."/>
            <person name="Narusaka M."/>
            <person name="Seki M."/>
            <person name="Sakurai T."/>
            <person name="Satou M."/>
            <person name="Tamse R."/>
            <person name="Vaysberg M."/>
            <person name="Wallender E.K."/>
            <person name="Wong C."/>
            <person name="Yamamura Y."/>
            <person name="Yuan S."/>
            <person name="Shinozaki K."/>
            <person name="Davis R.W."/>
            <person name="Theologis A."/>
            <person name="Ecker J.R."/>
        </authorList>
    </citation>
    <scope>NUCLEOTIDE SEQUENCE [LARGE SCALE MRNA]</scope>
    <source>
        <strain>cv. Columbia</strain>
    </source>
</reference>
<reference key="4">
    <citation type="journal article" date="2003" name="J. Mol. Evol.">
        <title>The carboxylesterase gene family from Arabidopsis thaliana.</title>
        <authorList>
            <person name="Marshall S.D."/>
            <person name="Putterill J.J."/>
            <person name="Plummer K.M."/>
            <person name="Newcomb R.D."/>
        </authorList>
    </citation>
    <scope>TISSUE SPECIFICITY</scope>
    <scope>GENE FAMILY</scope>
</reference>
<reference key="5">
    <citation type="journal article" date="2006" name="Plant Cell">
        <title>Genetic characterization and functional analysis of the GID1 gibberellin receptors in Arabidopsis.</title>
        <authorList>
            <person name="Griffiths J."/>
            <person name="Murase K."/>
            <person name="Rieu I."/>
            <person name="Zentella R."/>
            <person name="Zhang Z.L."/>
            <person name="Powers S.J."/>
            <person name="Gong F."/>
            <person name="Phillips A.L."/>
            <person name="Hedden P."/>
            <person name="Sun T.P."/>
            <person name="Thomas S.G."/>
        </authorList>
    </citation>
    <scope>FUNCTION</scope>
    <scope>INTERACTION WITH GAI AND RGA</scope>
    <scope>DISRUPTION PHENOTYPE</scope>
</reference>
<reference key="6">
    <citation type="journal article" date="2006" name="Plant J.">
        <title>Identification and characterization of Arabidopsis gibberellin receptors.</title>
        <authorList>
            <person name="Nakajima M."/>
            <person name="Shimada A."/>
            <person name="Takashi Y."/>
            <person name="Kim Y.C."/>
            <person name="Park S.H."/>
            <person name="Ueguchi-Tanaka M."/>
            <person name="Suzuki H."/>
            <person name="Katoh E."/>
            <person name="Iuchi S."/>
            <person name="Kobayashi M."/>
            <person name="Maeda T."/>
            <person name="Matsuoka M."/>
            <person name="Yamaguchi I."/>
        </authorList>
    </citation>
    <scope>FUNCTION</scope>
    <scope>INTERACTION WITH GAI; RGA; RGL1; RGL2 AND RGL3</scope>
</reference>
<reference key="7">
    <citation type="journal article" date="2007" name="Plant J.">
        <title>Multiple loss-of-function of Arabidopsis gibberellin receptor AtGID1s completely shuts down a gibberellin signal.</title>
        <authorList>
            <person name="Iuchi S."/>
            <person name="Suzuki H."/>
            <person name="Kim Y.C."/>
            <person name="Iuchi A."/>
            <person name="Kuromori T."/>
            <person name="Ueguchi-Tanaka M."/>
            <person name="Asami T."/>
            <person name="Yamaguchi I."/>
            <person name="Matsuoka M."/>
            <person name="Kobayashi M."/>
            <person name="Nakajima M."/>
        </authorList>
    </citation>
    <scope>FUNCTION</scope>
    <scope>DISRUPTION PHENOTYPE</scope>
</reference>
<reference key="8">
    <citation type="journal article" date="2009" name="Plant J.">
        <title>Differential expression and affinities of Arabidopsis gibberellin receptors can explain variation in phenotypes of multiple knock-out mutants.</title>
        <authorList>
            <person name="Suzuki H."/>
            <person name="Park S.-H."/>
            <person name="Okubo K."/>
            <person name="Kitamura J."/>
            <person name="Ueguchi-Tanaka M."/>
            <person name="Iuchi S."/>
            <person name="Katoh E."/>
            <person name="Kobayashi M."/>
            <person name="Yamaguchi I."/>
            <person name="Matsuoka M."/>
            <person name="Asami T."/>
            <person name="Nakajima M."/>
        </authorList>
    </citation>
    <scope>INTERACTION WITH RGL2</scope>
</reference>
<reference evidence="13 14" key="9">
    <citation type="journal article" date="2008" name="Nature">
        <title>Gibberellin-induced DELLA recognition by the gibberellin receptor GID1.</title>
        <authorList>
            <person name="Murase K."/>
            <person name="Hirano Y."/>
            <person name="Sun T.P."/>
            <person name="Hakoshima T."/>
        </authorList>
    </citation>
    <scope>X-RAY CRYSTALLOGRAPHY (1.80 ANGSTROMS) OF 1-344 IN COMPLEXES WITH GIBBERELLIN A3 AND GIBBERELLIN A4</scope>
</reference>
<dbReference type="EC" id="3.-.-.-"/>
<dbReference type="EMBL" id="AC009177">
    <property type="protein sequence ID" value="AAF27018.1"/>
    <property type="molecule type" value="Genomic_DNA"/>
</dbReference>
<dbReference type="EMBL" id="CP002686">
    <property type="protein sequence ID" value="AEE74188.1"/>
    <property type="molecule type" value="Genomic_DNA"/>
</dbReference>
<dbReference type="EMBL" id="AY136305">
    <property type="protein sequence ID" value="AAM96971.1"/>
    <property type="molecule type" value="mRNA"/>
</dbReference>
<dbReference type="EMBL" id="BT002605">
    <property type="protein sequence ID" value="AAO00965.1"/>
    <property type="molecule type" value="mRNA"/>
</dbReference>
<dbReference type="RefSeq" id="NP_187163.1">
    <property type="nucleotide sequence ID" value="NM_111384.4"/>
</dbReference>
<dbReference type="PDB" id="2ZSH">
    <property type="method" value="X-ray"/>
    <property type="resolution" value="1.80 A"/>
    <property type="chains" value="A=1-344"/>
</dbReference>
<dbReference type="PDB" id="2ZSI">
    <property type="method" value="X-ray"/>
    <property type="resolution" value="1.80 A"/>
    <property type="chains" value="A=1-344"/>
</dbReference>
<dbReference type="PDBsum" id="2ZSH"/>
<dbReference type="PDBsum" id="2ZSI"/>
<dbReference type="SMR" id="Q9MAA7"/>
<dbReference type="BioGRID" id="5009">
    <property type="interactions" value="12"/>
</dbReference>
<dbReference type="DIP" id="DIP-37659N"/>
<dbReference type="FunCoup" id="Q9MAA7">
    <property type="interactions" value="602"/>
</dbReference>
<dbReference type="IntAct" id="Q9MAA7">
    <property type="interactions" value="12"/>
</dbReference>
<dbReference type="STRING" id="3702.Q9MAA7"/>
<dbReference type="ESTHER" id="arath-gid1">
    <property type="family name" value="Plant_carboxylesterase"/>
</dbReference>
<dbReference type="MEROPS" id="S09.A10"/>
<dbReference type="PaxDb" id="3702-AT3G05120.1"/>
<dbReference type="ProteomicsDB" id="222347"/>
<dbReference type="EnsemblPlants" id="AT3G05120.1">
    <property type="protein sequence ID" value="AT3G05120.1"/>
    <property type="gene ID" value="AT3G05120"/>
</dbReference>
<dbReference type="GeneID" id="819674"/>
<dbReference type="Gramene" id="AT3G05120.1">
    <property type="protein sequence ID" value="AT3G05120.1"/>
    <property type="gene ID" value="AT3G05120"/>
</dbReference>
<dbReference type="KEGG" id="ath:AT3G05120"/>
<dbReference type="Araport" id="AT3G05120"/>
<dbReference type="TAIR" id="AT3G05120">
    <property type="gene designation" value="GID1A"/>
</dbReference>
<dbReference type="eggNOG" id="KOG1515">
    <property type="taxonomic scope" value="Eukaryota"/>
</dbReference>
<dbReference type="HOGENOM" id="CLU_012494_22_1_1"/>
<dbReference type="InParanoid" id="Q9MAA7"/>
<dbReference type="OMA" id="GWIALNW"/>
<dbReference type="OrthoDB" id="408631at2759"/>
<dbReference type="PhylomeDB" id="Q9MAA7"/>
<dbReference type="BioCyc" id="ARA:AT3G05120-MONOMER"/>
<dbReference type="EvolutionaryTrace" id="Q9MAA7"/>
<dbReference type="PRO" id="PR:Q9MAA7"/>
<dbReference type="Proteomes" id="UP000006548">
    <property type="component" value="Chromosome 3"/>
</dbReference>
<dbReference type="ExpressionAtlas" id="Q9MAA7">
    <property type="expression patterns" value="baseline and differential"/>
</dbReference>
<dbReference type="GO" id="GO:0005737">
    <property type="term" value="C:cytoplasm"/>
    <property type="evidence" value="ECO:0000314"/>
    <property type="project" value="TAIR"/>
</dbReference>
<dbReference type="GO" id="GO:0005634">
    <property type="term" value="C:nucleus"/>
    <property type="evidence" value="ECO:0000314"/>
    <property type="project" value="TAIR"/>
</dbReference>
<dbReference type="GO" id="GO:0010331">
    <property type="term" value="F:gibberellin binding"/>
    <property type="evidence" value="ECO:0000314"/>
    <property type="project" value="UniProtKB"/>
</dbReference>
<dbReference type="GO" id="GO:0016787">
    <property type="term" value="F:hydrolase activity"/>
    <property type="evidence" value="ECO:0007669"/>
    <property type="project" value="UniProtKB-KW"/>
</dbReference>
<dbReference type="GO" id="GO:0071456">
    <property type="term" value="P:cellular response to hypoxia"/>
    <property type="evidence" value="ECO:0007007"/>
    <property type="project" value="TAIR"/>
</dbReference>
<dbReference type="GO" id="GO:0048444">
    <property type="term" value="P:floral organ morphogenesis"/>
    <property type="evidence" value="ECO:0000316"/>
    <property type="project" value="TAIR"/>
</dbReference>
<dbReference type="GO" id="GO:0048530">
    <property type="term" value="P:fruit morphogenesis"/>
    <property type="evidence" value="ECO:0000315"/>
    <property type="project" value="CAFA"/>
</dbReference>
<dbReference type="GO" id="GO:0010476">
    <property type="term" value="P:gibberellin mediated signaling pathway"/>
    <property type="evidence" value="ECO:0000316"/>
    <property type="project" value="TAIR"/>
</dbReference>
<dbReference type="GO" id="GO:1905516">
    <property type="term" value="P:positive regulation of fertilization"/>
    <property type="evidence" value="ECO:0000316"/>
    <property type="project" value="CAFA"/>
</dbReference>
<dbReference type="GO" id="GO:0009939">
    <property type="term" value="P:positive regulation of gibberellic acid mediated signaling pathway"/>
    <property type="evidence" value="ECO:0000316"/>
    <property type="project" value="TAIR"/>
</dbReference>
<dbReference type="GO" id="GO:0009739">
    <property type="term" value="P:response to gibberellin"/>
    <property type="evidence" value="ECO:0000315"/>
    <property type="project" value="CAFA"/>
</dbReference>
<dbReference type="DisProt" id="DP00723"/>
<dbReference type="FunFam" id="3.40.50.1820:FF:000087">
    <property type="entry name" value="Gibberellin receptor GID1"/>
    <property type="match status" value="1"/>
</dbReference>
<dbReference type="Gene3D" id="3.40.50.1820">
    <property type="entry name" value="alpha/beta hydrolase"/>
    <property type="match status" value="1"/>
</dbReference>
<dbReference type="InterPro" id="IPR013094">
    <property type="entry name" value="AB_hydrolase_3"/>
</dbReference>
<dbReference type="InterPro" id="IPR029058">
    <property type="entry name" value="AB_hydrolase_fold"/>
</dbReference>
<dbReference type="InterPro" id="IPR050466">
    <property type="entry name" value="Carboxylest/Gibb_receptor"/>
</dbReference>
<dbReference type="InterPro" id="IPR002168">
    <property type="entry name" value="Lipase_GDXG_HIS_AS"/>
</dbReference>
<dbReference type="InterPro" id="IPR033140">
    <property type="entry name" value="Lipase_GDXG_put_SER_AS"/>
</dbReference>
<dbReference type="PANTHER" id="PTHR23024">
    <property type="entry name" value="ARYLACETAMIDE DEACETYLASE"/>
    <property type="match status" value="1"/>
</dbReference>
<dbReference type="PANTHER" id="PTHR23024:SF485">
    <property type="entry name" value="GIBBERELLIN RECEPTOR GID1A"/>
    <property type="match status" value="1"/>
</dbReference>
<dbReference type="Pfam" id="PF07859">
    <property type="entry name" value="Abhydrolase_3"/>
    <property type="match status" value="1"/>
</dbReference>
<dbReference type="SUPFAM" id="SSF53474">
    <property type="entry name" value="alpha/beta-Hydrolases"/>
    <property type="match status" value="1"/>
</dbReference>
<dbReference type="PROSITE" id="PS01173">
    <property type="entry name" value="LIPASE_GDXG_HIS"/>
    <property type="match status" value="1"/>
</dbReference>
<dbReference type="PROSITE" id="PS01174">
    <property type="entry name" value="LIPASE_GDXG_SER"/>
    <property type="match status" value="1"/>
</dbReference>
<sequence>MAASDEVNLIESRTVVPLNTWVLISNFKVAYNILRRPDGTFNRHLAEYLDRKVTANANPVDGVFSFDVLIDRRINLLSRVYRPAYADQEQPPSILDLEKPVDGDIVPVILFFHGGSFAHSSANSAIYDTLCRRLVGLCKCVVVSVNYRRAPENPYPCAYDDGWIALNWVNSRSWLKSKKDSKVHIFLAGDSSGGNIAHNVALRAGESGIDVLGNILLNPMFGGNERTESEKSLDGKYFVTVRDRDWYWKAFLPEGEDREHPACNPFSPRGKSLEGVSFPKSLVVVAGLDLIRDWQLAYAEGLKKAGQEVKLMHLEKATVGFYLLPNNNHFHNVMDEISAFVNAEC</sequence>
<proteinExistence type="evidence at protein level"/>
<keyword id="KW-0002">3D-structure</keyword>
<keyword id="KW-0007">Acetylation</keyword>
<keyword id="KW-0939">Gibberellin signaling pathway</keyword>
<keyword id="KW-0378">Hydrolase</keyword>
<keyword id="KW-0539">Nucleus</keyword>
<keyword id="KW-0675">Receptor</keyword>
<keyword id="KW-1185">Reference proteome</keyword>
<protein>
    <recommendedName>
        <fullName>Gibberellin receptor GID1A</fullName>
        <ecNumber>3.-.-.-</ecNumber>
    </recommendedName>
    <alternativeName>
        <fullName>AtCXE10</fullName>
    </alternativeName>
    <alternativeName>
        <fullName>Carboxylesterase 10</fullName>
    </alternativeName>
    <alternativeName>
        <fullName>GID1-like protein 1</fullName>
    </alternativeName>
    <alternativeName>
        <fullName>Protein GA INSENSITIVE DWARF 1A</fullName>
        <shortName>AtGID1A</shortName>
    </alternativeName>
</protein>
<comment type="function">
    <text evidence="7 8 9">Functions as a soluble gibberellin (GA) receptor. GA is an essential hormone that regulates growth and development in plants. Binds with high affinity the biologically active gibberellin GA4, but has no affinity for the biologically inactive GAs. In response to GA, interacts with specific DELLA proteins, known as repressors of GA-induced growth, and targets them for degradation via proteasome. Seems to be required for GA signaling that controls root growth, seed germination, stem elongation and flower development. Partially redundant with GID1B and GID1C.</text>
</comment>
<comment type="subunit">
    <text evidence="7 8 10 11">Interacts (via N-terminus) with the DELLA proteins GAI, RGA, RGL1, RGL2 and RGL3 (via N-terminus) in a GA-dependent manner.</text>
</comment>
<comment type="interaction">
    <interactant intactId="EBI-963597">
        <id>Q9MAA7</id>
    </interactant>
    <interactant intactId="EBI-1787005">
        <id>Q9SV55</id>
        <label>AFPH2</label>
    </interactant>
    <organismsDiffer>false</organismsDiffer>
    <experiments>3</experiments>
</comment>
<comment type="interaction">
    <interactant intactId="EBI-963597">
        <id>Q9MAA7</id>
    </interactant>
    <interactant intactId="EBI-963606">
        <id>Q9LQT8</id>
        <label>GAI</label>
    </interactant>
    <organismsDiffer>false</organismsDiffer>
    <experiments>14</experiments>
</comment>
<comment type="interaction">
    <interactant intactId="EBI-963597">
        <id>Q9MAA7</id>
    </interactant>
    <interactant intactId="EBI-619033">
        <id>Q9STX3</id>
        <label>GID2</label>
    </interactant>
    <organismsDiffer>false</organismsDiffer>
    <experiments>3</experiments>
</comment>
<comment type="interaction">
    <interactant intactId="EBI-963597">
        <id>Q9MAA7</id>
    </interactant>
    <interactant intactId="EBI-1644689">
        <id>O04294</id>
        <label>IMPA3</label>
    </interactant>
    <organismsDiffer>false</organismsDiffer>
    <experiments>3</experiments>
</comment>
<comment type="interaction">
    <interactant intactId="EBI-963597">
        <id>Q9MAA7</id>
    </interactant>
    <interactant intactId="EBI-25529686">
        <id>Q9SG92</id>
        <label>MES17</label>
    </interactant>
    <organismsDiffer>false</organismsDiffer>
    <experiments>3</experiments>
</comment>
<comment type="interaction">
    <interactant intactId="EBI-963597">
        <id>Q9MAA7</id>
    </interactant>
    <interactant intactId="EBI-963624">
        <id>Q9SLH3</id>
        <label>RGA</label>
    </interactant>
    <organismsDiffer>false</organismsDiffer>
    <experiments>13</experiments>
</comment>
<comment type="interaction">
    <interactant intactId="EBI-963597">
        <id>Q9MAA7</id>
    </interactant>
    <interactant intactId="EBI-963647">
        <id>Q9C8Y3</id>
        <label>RGL1</label>
    </interactant>
    <organismsDiffer>false</organismsDiffer>
    <experiments>7</experiments>
</comment>
<comment type="interaction">
    <interactant intactId="EBI-963597">
        <id>Q9MAA7</id>
    </interactant>
    <interactant intactId="EBI-963665">
        <id>Q8GXW1</id>
        <label>RGL2</label>
    </interactant>
    <organismsDiffer>false</organismsDiffer>
    <experiments>8</experiments>
</comment>
<comment type="interaction">
    <interactant intactId="EBI-963597">
        <id>Q9MAA7</id>
    </interactant>
    <interactant intactId="EBI-15681313">
        <id>Q9LF53</id>
        <label>RGL3</label>
    </interactant>
    <organismsDiffer>false</organismsDiffer>
    <experiments>5</experiments>
</comment>
<comment type="subcellular location">
    <subcellularLocation>
        <location evidence="1">Nucleus</location>
    </subcellularLocation>
</comment>
<comment type="tissue specificity">
    <text evidence="6">Widely expressed.</text>
</comment>
<comment type="disruption phenotype">
    <text evidence="8 9">No visible phenotype under normal growth condition.</text>
</comment>
<comment type="similarity">
    <text evidence="12">Belongs to the 'GDXG' lipolytic enzyme family.</text>
</comment>
<organism>
    <name type="scientific">Arabidopsis thaliana</name>
    <name type="common">Mouse-ear cress</name>
    <dbReference type="NCBI Taxonomy" id="3702"/>
    <lineage>
        <taxon>Eukaryota</taxon>
        <taxon>Viridiplantae</taxon>
        <taxon>Streptophyta</taxon>
        <taxon>Embryophyta</taxon>
        <taxon>Tracheophyta</taxon>
        <taxon>Spermatophyta</taxon>
        <taxon>Magnoliopsida</taxon>
        <taxon>eudicotyledons</taxon>
        <taxon>Gunneridae</taxon>
        <taxon>Pentapetalae</taxon>
        <taxon>rosids</taxon>
        <taxon>malvids</taxon>
        <taxon>Brassicales</taxon>
        <taxon>Brassicaceae</taxon>
        <taxon>Camelineae</taxon>
        <taxon>Arabidopsis</taxon>
    </lineage>
</organism>
<gene>
    <name type="primary">GID1A</name>
    <name type="synonym">CXE10</name>
    <name type="synonym">GID1L1</name>
    <name type="ordered locus">At3g05120</name>
    <name type="ORF">T12H1.8</name>
</gene>
<name>GID1A_ARATH</name>
<feature type="initiator methionine" description="Removed" evidence="4">
    <location>
        <position position="1"/>
    </location>
</feature>
<feature type="chain" id="PRO_0000071558" description="Gibberellin receptor GID1A">
    <location>
        <begin position="2"/>
        <end position="345"/>
    </location>
</feature>
<feature type="short sequence motif" description="Involved in the stabilization of the negatively charged intermediate by the formation of the oxyanion hole" evidence="3">
    <location>
        <begin position="113"/>
        <end position="115"/>
    </location>
</feature>
<feature type="active site" evidence="2 5">
    <location>
        <position position="191"/>
    </location>
</feature>
<feature type="active site" evidence="2 5">
    <location>
        <position position="289"/>
    </location>
</feature>
<feature type="binding site" evidence="10 14">
    <location>
        <begin position="115"/>
        <end position="116"/>
    </location>
    <ligand>
        <name>gibberellin A4</name>
        <dbReference type="ChEBI" id="CHEBI:73251"/>
    </ligand>
</feature>
<feature type="binding site" evidence="10 13">
    <location>
        <position position="116"/>
    </location>
    <ligand>
        <name>gibberellin A3</name>
        <dbReference type="ChEBI" id="CHEBI:58590"/>
    </ligand>
</feature>
<feature type="binding site" evidence="10 13">
    <location>
        <position position="127"/>
    </location>
    <ligand>
        <name>gibberellin A3</name>
        <dbReference type="ChEBI" id="CHEBI:58590"/>
    </ligand>
</feature>
<feature type="binding site" evidence="10 14">
    <location>
        <position position="127"/>
    </location>
    <ligand>
        <name>gibberellin A4</name>
        <dbReference type="ChEBI" id="CHEBI:73251"/>
    </ligand>
</feature>
<feature type="binding site" evidence="10 13">
    <location>
        <position position="191"/>
    </location>
    <ligand>
        <name>gibberellin A3</name>
        <dbReference type="ChEBI" id="CHEBI:58590"/>
    </ligand>
</feature>
<feature type="binding site" evidence="10 14">
    <location>
        <position position="191"/>
    </location>
    <ligand>
        <name>gibberellin A4</name>
        <dbReference type="ChEBI" id="CHEBI:73251"/>
    </ligand>
</feature>
<feature type="binding site" evidence="10 13">
    <location>
        <position position="238"/>
    </location>
    <ligand>
        <name>gibberellin A3</name>
        <dbReference type="ChEBI" id="CHEBI:58590"/>
    </ligand>
</feature>
<feature type="binding site" evidence="10 13">
    <location>
        <position position="320"/>
    </location>
    <ligand>
        <name>gibberellin A3</name>
        <dbReference type="ChEBI" id="CHEBI:58590"/>
    </ligand>
</feature>
<feature type="binding site" evidence="10 14">
    <location>
        <position position="320"/>
    </location>
    <ligand>
        <name>gibberellin A4</name>
        <dbReference type="ChEBI" id="CHEBI:73251"/>
    </ligand>
</feature>
<feature type="modified residue" description="N-acetylalanine" evidence="4">
    <location>
        <position position="2"/>
    </location>
</feature>
<feature type="helix" evidence="15">
    <location>
        <begin position="10"/>
        <end position="13"/>
    </location>
</feature>
<feature type="helix" evidence="15">
    <location>
        <begin position="18"/>
        <end position="34"/>
    </location>
</feature>
<feature type="helix" evidence="15">
    <location>
        <begin position="43"/>
        <end position="49"/>
    </location>
</feature>
<feature type="strand" evidence="15">
    <location>
        <begin position="63"/>
        <end position="71"/>
    </location>
</feature>
<feature type="turn" evidence="15">
    <location>
        <begin position="72"/>
        <end position="75"/>
    </location>
</feature>
<feature type="strand" evidence="15">
    <location>
        <begin position="76"/>
        <end position="83"/>
    </location>
</feature>
<feature type="strand" evidence="15">
    <location>
        <begin position="103"/>
        <end position="105"/>
    </location>
</feature>
<feature type="strand" evidence="15">
    <location>
        <begin position="107"/>
        <end position="112"/>
    </location>
</feature>
<feature type="turn" evidence="15">
    <location>
        <begin position="116"/>
        <end position="118"/>
    </location>
</feature>
<feature type="helix" evidence="15">
    <location>
        <begin position="125"/>
        <end position="138"/>
    </location>
</feature>
<feature type="strand" evidence="15">
    <location>
        <begin position="140"/>
        <end position="145"/>
    </location>
</feature>
<feature type="turn" evidence="15">
    <location>
        <begin position="150"/>
        <end position="152"/>
    </location>
</feature>
<feature type="helix" evidence="15">
    <location>
        <begin position="157"/>
        <end position="170"/>
    </location>
</feature>
<feature type="helix" evidence="15">
    <location>
        <begin position="173"/>
        <end position="175"/>
    </location>
</feature>
<feature type="turn" evidence="15">
    <location>
        <begin position="178"/>
        <end position="180"/>
    </location>
</feature>
<feature type="strand" evidence="15">
    <location>
        <begin position="184"/>
        <end position="190"/>
    </location>
</feature>
<feature type="helix" evidence="15">
    <location>
        <begin position="193"/>
        <end position="205"/>
    </location>
</feature>
<feature type="turn" evidence="15">
    <location>
        <begin position="206"/>
        <end position="208"/>
    </location>
</feature>
<feature type="strand" evidence="15">
    <location>
        <begin position="213"/>
        <end position="218"/>
    </location>
</feature>
<feature type="helix" evidence="15">
    <location>
        <begin position="228"/>
        <end position="233"/>
    </location>
</feature>
<feature type="turn" evidence="15">
    <location>
        <begin position="234"/>
        <end position="236"/>
    </location>
</feature>
<feature type="helix" evidence="15">
    <location>
        <begin position="241"/>
        <end position="251"/>
    </location>
</feature>
<feature type="turn" evidence="15">
    <location>
        <begin position="261"/>
        <end position="263"/>
    </location>
</feature>
<feature type="strand" evidence="15">
    <location>
        <begin position="280"/>
        <end position="286"/>
    </location>
</feature>
<feature type="helix" evidence="15">
    <location>
        <begin position="292"/>
        <end position="304"/>
    </location>
</feature>
<feature type="strand" evidence="15">
    <location>
        <begin position="309"/>
        <end position="314"/>
    </location>
</feature>
<feature type="turn" evidence="15">
    <location>
        <begin position="319"/>
        <end position="322"/>
    </location>
</feature>
<feature type="strand" evidence="15">
    <location>
        <begin position="323"/>
        <end position="325"/>
    </location>
</feature>
<feature type="helix" evidence="15">
    <location>
        <begin position="328"/>
        <end position="342"/>
    </location>
</feature>
<evidence type="ECO:0000250" key="1"/>
<evidence type="ECO:0000250" key="2">
    <source>
        <dbReference type="UniProtKB" id="Q0ZPV7"/>
    </source>
</evidence>
<evidence type="ECO:0000250" key="3">
    <source>
        <dbReference type="UniProtKB" id="Q5NUF3"/>
    </source>
</evidence>
<evidence type="ECO:0000250" key="4">
    <source>
        <dbReference type="UniProtKB" id="Q9LT10"/>
    </source>
</evidence>
<evidence type="ECO:0000255" key="5">
    <source>
        <dbReference type="PROSITE-ProRule" id="PRU10038"/>
    </source>
</evidence>
<evidence type="ECO:0000269" key="6">
    <source>
    </source>
</evidence>
<evidence type="ECO:0000269" key="7">
    <source>
    </source>
</evidence>
<evidence type="ECO:0000269" key="8">
    <source>
    </source>
</evidence>
<evidence type="ECO:0000269" key="9">
    <source>
    </source>
</evidence>
<evidence type="ECO:0000269" key="10">
    <source>
    </source>
</evidence>
<evidence type="ECO:0000269" key="11">
    <source>
    </source>
</evidence>
<evidence type="ECO:0000305" key="12"/>
<evidence type="ECO:0007744" key="13">
    <source>
        <dbReference type="PDB" id="2ZSH"/>
    </source>
</evidence>
<evidence type="ECO:0007744" key="14">
    <source>
        <dbReference type="PDB" id="2ZSI"/>
    </source>
</evidence>
<evidence type="ECO:0007829" key="15">
    <source>
        <dbReference type="PDB" id="2ZSH"/>
    </source>
</evidence>
<accession>Q9MAA7</accession>